<feature type="chain" id="PRO_1000185261" description="Formate--tetrahydrofolate ligase">
    <location>
        <begin position="1"/>
        <end position="557"/>
    </location>
</feature>
<feature type="binding site" evidence="1">
    <location>
        <begin position="67"/>
        <end position="74"/>
    </location>
    <ligand>
        <name>ATP</name>
        <dbReference type="ChEBI" id="CHEBI:30616"/>
    </ligand>
</feature>
<name>FTHS_CERSK</name>
<proteinExistence type="inferred from homology"/>
<gene>
    <name evidence="1" type="primary">fhs</name>
    <name type="ordered locus">RSKD131_2019</name>
</gene>
<evidence type="ECO:0000255" key="1">
    <source>
        <dbReference type="HAMAP-Rule" id="MF_01543"/>
    </source>
</evidence>
<dbReference type="EC" id="6.3.4.3" evidence="1"/>
<dbReference type="EMBL" id="CP001150">
    <property type="protein sequence ID" value="ACM01879.1"/>
    <property type="molecule type" value="Genomic_DNA"/>
</dbReference>
<dbReference type="RefSeq" id="WP_015921138.1">
    <property type="nucleotide sequence ID" value="NC_011963.1"/>
</dbReference>
<dbReference type="SMR" id="B9KLK4"/>
<dbReference type="GeneID" id="67447411"/>
<dbReference type="KEGG" id="rsk:RSKD131_2019"/>
<dbReference type="HOGENOM" id="CLU_003601_3_3_5"/>
<dbReference type="UniPathway" id="UPA00193"/>
<dbReference type="GO" id="GO:0005524">
    <property type="term" value="F:ATP binding"/>
    <property type="evidence" value="ECO:0007669"/>
    <property type="project" value="UniProtKB-UniRule"/>
</dbReference>
<dbReference type="GO" id="GO:0004329">
    <property type="term" value="F:formate-tetrahydrofolate ligase activity"/>
    <property type="evidence" value="ECO:0007669"/>
    <property type="project" value="UniProtKB-UniRule"/>
</dbReference>
<dbReference type="GO" id="GO:0035999">
    <property type="term" value="P:tetrahydrofolate interconversion"/>
    <property type="evidence" value="ECO:0007669"/>
    <property type="project" value="UniProtKB-UniRule"/>
</dbReference>
<dbReference type="CDD" id="cd00477">
    <property type="entry name" value="FTHFS"/>
    <property type="match status" value="1"/>
</dbReference>
<dbReference type="FunFam" id="3.30.1510.10:FF:000001">
    <property type="entry name" value="Formate--tetrahydrofolate ligase"/>
    <property type="match status" value="1"/>
</dbReference>
<dbReference type="Gene3D" id="3.30.1510.10">
    <property type="entry name" value="Domain 2, N(10)-formyltetrahydrofolate synthetase"/>
    <property type="match status" value="1"/>
</dbReference>
<dbReference type="Gene3D" id="3.10.410.10">
    <property type="entry name" value="Formyltetrahydrofolate synthetase, domain 3"/>
    <property type="match status" value="1"/>
</dbReference>
<dbReference type="Gene3D" id="3.40.50.300">
    <property type="entry name" value="P-loop containing nucleotide triphosphate hydrolases"/>
    <property type="match status" value="1"/>
</dbReference>
<dbReference type="HAMAP" id="MF_01543">
    <property type="entry name" value="FTHFS"/>
    <property type="match status" value="1"/>
</dbReference>
<dbReference type="InterPro" id="IPR000559">
    <property type="entry name" value="Formate_THF_ligase"/>
</dbReference>
<dbReference type="InterPro" id="IPR020628">
    <property type="entry name" value="Formate_THF_ligase_CS"/>
</dbReference>
<dbReference type="InterPro" id="IPR027417">
    <property type="entry name" value="P-loop_NTPase"/>
</dbReference>
<dbReference type="NCBIfam" id="NF010030">
    <property type="entry name" value="PRK13505.1"/>
    <property type="match status" value="1"/>
</dbReference>
<dbReference type="Pfam" id="PF01268">
    <property type="entry name" value="FTHFS"/>
    <property type="match status" value="1"/>
</dbReference>
<dbReference type="SUPFAM" id="SSF52540">
    <property type="entry name" value="P-loop containing nucleoside triphosphate hydrolases"/>
    <property type="match status" value="1"/>
</dbReference>
<dbReference type="PROSITE" id="PS00721">
    <property type="entry name" value="FTHFS_1"/>
    <property type="match status" value="1"/>
</dbReference>
<dbReference type="PROSITE" id="PS00722">
    <property type="entry name" value="FTHFS_2"/>
    <property type="match status" value="1"/>
</dbReference>
<reference key="1">
    <citation type="journal article" date="2009" name="J. Bacteriol.">
        <title>Complete genome sequence of Rhodobacter sphaeroides KD131.</title>
        <authorList>
            <person name="Lim S.-K."/>
            <person name="Kim S.J."/>
            <person name="Cha S.H."/>
            <person name="Oh Y.-K."/>
            <person name="Rhee H.-J."/>
            <person name="Kim M.-S."/>
            <person name="Lee J.K."/>
        </authorList>
    </citation>
    <scope>NUCLEOTIDE SEQUENCE [LARGE SCALE GENOMIC DNA]</scope>
    <source>
        <strain>KD131 / KCTC 12085</strain>
    </source>
</reference>
<accession>B9KLK4</accession>
<protein>
    <recommendedName>
        <fullName evidence="1">Formate--tetrahydrofolate ligase</fullName>
        <ecNumber evidence="1">6.3.4.3</ecNumber>
    </recommendedName>
    <alternativeName>
        <fullName evidence="1">Formyltetrahydrofolate synthetase</fullName>
        <shortName evidence="1">FHS</shortName>
        <shortName evidence="1">FTHFS</shortName>
    </alternativeName>
</protein>
<comment type="catalytic activity">
    <reaction evidence="1">
        <text>(6S)-5,6,7,8-tetrahydrofolate + formate + ATP = (6R)-10-formyltetrahydrofolate + ADP + phosphate</text>
        <dbReference type="Rhea" id="RHEA:20221"/>
        <dbReference type="ChEBI" id="CHEBI:15740"/>
        <dbReference type="ChEBI" id="CHEBI:30616"/>
        <dbReference type="ChEBI" id="CHEBI:43474"/>
        <dbReference type="ChEBI" id="CHEBI:57453"/>
        <dbReference type="ChEBI" id="CHEBI:195366"/>
        <dbReference type="ChEBI" id="CHEBI:456216"/>
        <dbReference type="EC" id="6.3.4.3"/>
    </reaction>
</comment>
<comment type="pathway">
    <text evidence="1">One-carbon metabolism; tetrahydrofolate interconversion.</text>
</comment>
<comment type="similarity">
    <text evidence="1">Belongs to the formate--tetrahydrofolate ligase family.</text>
</comment>
<organism>
    <name type="scientific">Cereibacter sphaeroides (strain KD131 / KCTC 12085)</name>
    <name type="common">Rhodobacter sphaeroides</name>
    <dbReference type="NCBI Taxonomy" id="557760"/>
    <lineage>
        <taxon>Bacteria</taxon>
        <taxon>Pseudomonadati</taxon>
        <taxon>Pseudomonadota</taxon>
        <taxon>Alphaproteobacteria</taxon>
        <taxon>Rhodobacterales</taxon>
        <taxon>Paracoccaceae</taxon>
        <taxon>Cereibacter</taxon>
    </lineage>
</organism>
<sequence length="557" mass="59588">MAVQTDIEIARAARKKPIQEIGAGLGIPAEALIPYGHDKAKVGQGFIRGLEGRPDGKLILVTAINPTPAGEGKTTTTVGLGDGLNRIGKKAVICIREASLGPNFGMKGGAAGGGRAQVVPMEDMNLHFTGDFHAITAAHNLLAAMIDNHIYWGNALELDARRITWRRVMDMNDRALRDTVVNLGGVANGFPRQTGFDITVASEVMAILCLADDLEDLERRLGRIVVGYRRDKSPVYCRDLKAAGAMAVLLKDAMQPNLVQTIENNPAFVHGGPFANIAHGCNSVIATRTALKLADYVVTEAGFGADLGAEKFFDIKCRLAGLKPSAAVVVATVRALKMNGGVAREDLGREDVAALRRGCANLGRHIANVKGFGVPVVVAINHFTTDTEAEIEAVRAYAAGQGAEAFLCRHWAEGSAGIEDLAQKVVELAEAPSMFAPLYPDDMPLFEKMETVARRIYHAHDVIADHVIRDQLRTWEEAGYGALPVCMAKTQYSFTTDAAIRGAPEGHSIPIREVRLAAGAGFVVAICGEIRTMPGLPSQPAAELIHLDEEGRIEGLF</sequence>
<keyword id="KW-0067">ATP-binding</keyword>
<keyword id="KW-0436">Ligase</keyword>
<keyword id="KW-0547">Nucleotide-binding</keyword>
<keyword id="KW-0554">One-carbon metabolism</keyword>